<accession>Q94KK5</accession>
<accession>Q9M321</accession>
<reference key="1">
    <citation type="journal article" date="2001" name="Mol. Biol. Cell">
        <title>Interactions between syntaxins identify at least five SNARE complexes within the Golgi/prevacuolar system of the Arabidopsis cell.</title>
        <authorList>
            <person name="Sanderfoot A.A."/>
            <person name="Kovaleva V."/>
            <person name="Bassham D.C."/>
            <person name="Raikhel N.V."/>
        </authorList>
    </citation>
    <scope>NUCLEOTIDE SEQUENCE [MRNA]</scope>
</reference>
<reference key="2">
    <citation type="journal article" date="2000" name="Nature">
        <title>Sequence and analysis of chromosome 3 of the plant Arabidopsis thaliana.</title>
        <authorList>
            <person name="Salanoubat M."/>
            <person name="Lemcke K."/>
            <person name="Rieger M."/>
            <person name="Ansorge W."/>
            <person name="Unseld M."/>
            <person name="Fartmann B."/>
            <person name="Valle G."/>
            <person name="Bloecker H."/>
            <person name="Perez-Alonso M."/>
            <person name="Obermaier B."/>
            <person name="Delseny M."/>
            <person name="Boutry M."/>
            <person name="Grivell L.A."/>
            <person name="Mache R."/>
            <person name="Puigdomenech P."/>
            <person name="De Simone V."/>
            <person name="Choisne N."/>
            <person name="Artiguenave F."/>
            <person name="Robert C."/>
            <person name="Brottier P."/>
            <person name="Wincker P."/>
            <person name="Cattolico L."/>
            <person name="Weissenbach J."/>
            <person name="Saurin W."/>
            <person name="Quetier F."/>
            <person name="Schaefer M."/>
            <person name="Mueller-Auer S."/>
            <person name="Gabel C."/>
            <person name="Fuchs M."/>
            <person name="Benes V."/>
            <person name="Wurmbach E."/>
            <person name="Drzonek H."/>
            <person name="Erfle H."/>
            <person name="Jordan N."/>
            <person name="Bangert S."/>
            <person name="Wiedelmann R."/>
            <person name="Kranz H."/>
            <person name="Voss H."/>
            <person name="Holland R."/>
            <person name="Brandt P."/>
            <person name="Nyakatura G."/>
            <person name="Vezzi A."/>
            <person name="D'Angelo M."/>
            <person name="Pallavicini A."/>
            <person name="Toppo S."/>
            <person name="Simionati B."/>
            <person name="Conrad A."/>
            <person name="Hornischer K."/>
            <person name="Kauer G."/>
            <person name="Loehnert T.-H."/>
            <person name="Nordsiek G."/>
            <person name="Reichelt J."/>
            <person name="Scharfe M."/>
            <person name="Schoen O."/>
            <person name="Bargues M."/>
            <person name="Terol J."/>
            <person name="Climent J."/>
            <person name="Navarro P."/>
            <person name="Collado C."/>
            <person name="Perez-Perez A."/>
            <person name="Ottenwaelder B."/>
            <person name="Duchemin D."/>
            <person name="Cooke R."/>
            <person name="Laudie M."/>
            <person name="Berger-Llauro C."/>
            <person name="Purnelle B."/>
            <person name="Masuy D."/>
            <person name="de Haan M."/>
            <person name="Maarse A.C."/>
            <person name="Alcaraz J.-P."/>
            <person name="Cottet A."/>
            <person name="Casacuberta E."/>
            <person name="Monfort A."/>
            <person name="Argiriou A."/>
            <person name="Flores M."/>
            <person name="Liguori R."/>
            <person name="Vitale D."/>
            <person name="Mannhaupt G."/>
            <person name="Haase D."/>
            <person name="Schoof H."/>
            <person name="Rudd S."/>
            <person name="Zaccaria P."/>
            <person name="Mewes H.-W."/>
            <person name="Mayer K.F.X."/>
            <person name="Kaul S."/>
            <person name="Town C.D."/>
            <person name="Koo H.L."/>
            <person name="Tallon L.J."/>
            <person name="Jenkins J."/>
            <person name="Rooney T."/>
            <person name="Rizzo M."/>
            <person name="Walts A."/>
            <person name="Utterback T."/>
            <person name="Fujii C.Y."/>
            <person name="Shea T.P."/>
            <person name="Creasy T.H."/>
            <person name="Haas B."/>
            <person name="Maiti R."/>
            <person name="Wu D."/>
            <person name="Peterson J."/>
            <person name="Van Aken S."/>
            <person name="Pai G."/>
            <person name="Militscher J."/>
            <person name="Sellers P."/>
            <person name="Gill J.E."/>
            <person name="Feldblyum T.V."/>
            <person name="Preuss D."/>
            <person name="Lin X."/>
            <person name="Nierman W.C."/>
            <person name="Salzberg S.L."/>
            <person name="White O."/>
            <person name="Venter J.C."/>
            <person name="Fraser C.M."/>
            <person name="Kaneko T."/>
            <person name="Nakamura Y."/>
            <person name="Sato S."/>
            <person name="Kato T."/>
            <person name="Asamizu E."/>
            <person name="Sasamoto S."/>
            <person name="Kimura T."/>
            <person name="Idesawa K."/>
            <person name="Kawashima K."/>
            <person name="Kishida Y."/>
            <person name="Kiyokawa C."/>
            <person name="Kohara M."/>
            <person name="Matsumoto M."/>
            <person name="Matsuno A."/>
            <person name="Muraki A."/>
            <person name="Nakayama S."/>
            <person name="Nakazaki N."/>
            <person name="Shinpo S."/>
            <person name="Takeuchi C."/>
            <person name="Wada T."/>
            <person name="Watanabe A."/>
            <person name="Yamada M."/>
            <person name="Yasuda M."/>
            <person name="Tabata S."/>
        </authorList>
    </citation>
    <scope>NUCLEOTIDE SEQUENCE [LARGE SCALE GENOMIC DNA]</scope>
    <source>
        <strain>cv. Columbia</strain>
    </source>
</reference>
<reference key="3">
    <citation type="journal article" date="2017" name="Plant J.">
        <title>Araport11: a complete reannotation of the Arabidopsis thaliana reference genome.</title>
        <authorList>
            <person name="Cheng C.Y."/>
            <person name="Krishnakumar V."/>
            <person name="Chan A.P."/>
            <person name="Thibaud-Nissen F."/>
            <person name="Schobel S."/>
            <person name="Town C.D."/>
        </authorList>
    </citation>
    <scope>GENOME REANNOTATION</scope>
    <source>
        <strain>cv. Columbia</strain>
    </source>
</reference>
<gene>
    <name type="primary">SYP73</name>
    <name type="ordered locus">At3g61450</name>
    <name type="ORF">F2A19.50</name>
</gene>
<proteinExistence type="evidence at transcript level"/>
<keyword id="KW-0025">Alternative splicing</keyword>
<keyword id="KW-0175">Coiled coil</keyword>
<keyword id="KW-0472">Membrane</keyword>
<keyword id="KW-0597">Phosphoprotein</keyword>
<keyword id="KW-0653">Protein transport</keyword>
<keyword id="KW-1185">Reference proteome</keyword>
<keyword id="KW-0812">Transmembrane</keyword>
<keyword id="KW-1133">Transmembrane helix</keyword>
<keyword id="KW-0813">Transport</keyword>
<evidence type="ECO:0000250" key="1"/>
<evidence type="ECO:0000250" key="2">
    <source>
        <dbReference type="UniProtKB" id="Q9SF29"/>
    </source>
</evidence>
<evidence type="ECO:0000255" key="3"/>
<evidence type="ECO:0000255" key="4">
    <source>
        <dbReference type="PROSITE-ProRule" id="PRU00202"/>
    </source>
</evidence>
<evidence type="ECO:0000305" key="5"/>
<sequence length="263" mass="29818">MGVIDLITRVDSICKKYEKYDINRQRDANVSGDDAFSRLYSAVEYALETVLQKTEDLSSETNKAKAVAMNAEIRRTKARLLEGIPKLQRLSLKKVKGLSKEELDARNDLVLSLRDKIEAIPESSAPVVGGWEASTSYSNIRFDTNVSDDRIGSEYFQPTGESDQFKQEYEMKRIKQARLDYIAEGLDTLKNMAQDINEELDRQEPLMDEIDTKIDKAATDLKSTNVRLKDTVTKLRSSRNFCIDIILLCILLGIAAFIYNSVK</sequence>
<comment type="function">
    <text evidence="1">Vesicle trafficking protein that functions in the secretory pathway.</text>
</comment>
<comment type="subunit">
    <text evidence="1">Part of the t-SNARE complex.</text>
</comment>
<comment type="subcellular location">
    <subcellularLocation>
        <location evidence="1">Membrane</location>
        <topology evidence="1">Single-pass type IV membrane protein</topology>
    </subcellularLocation>
</comment>
<comment type="alternative products">
    <event type="alternative splicing"/>
    <isoform>
        <id>Q94KK5-1</id>
        <name>1</name>
        <sequence type="displayed"/>
    </isoform>
    <text>A number of isoforms are produced. According to EST sequences.</text>
</comment>
<comment type="tissue specificity">
    <text>Expressed in root, leaf, stem, flower and silique.</text>
</comment>
<comment type="similarity">
    <text evidence="5">Belongs to the syntaxin family.</text>
</comment>
<comment type="sequence caution" evidence="5">
    <conflict type="erroneous gene model prediction">
        <sequence resource="EMBL-CDS" id="CAB71075"/>
    </conflict>
</comment>
<protein>
    <recommendedName>
        <fullName>Syntaxin-73</fullName>
        <shortName>AtSYP73</shortName>
    </recommendedName>
</protein>
<organism>
    <name type="scientific">Arabidopsis thaliana</name>
    <name type="common">Mouse-ear cress</name>
    <dbReference type="NCBI Taxonomy" id="3702"/>
    <lineage>
        <taxon>Eukaryota</taxon>
        <taxon>Viridiplantae</taxon>
        <taxon>Streptophyta</taxon>
        <taxon>Embryophyta</taxon>
        <taxon>Tracheophyta</taxon>
        <taxon>Spermatophyta</taxon>
        <taxon>Magnoliopsida</taxon>
        <taxon>eudicotyledons</taxon>
        <taxon>Gunneridae</taxon>
        <taxon>Pentapetalae</taxon>
        <taxon>rosids</taxon>
        <taxon>malvids</taxon>
        <taxon>Brassicales</taxon>
        <taxon>Brassicaceae</taxon>
        <taxon>Camelineae</taxon>
        <taxon>Arabidopsis</taxon>
    </lineage>
</organism>
<name>SYP73_ARATH</name>
<dbReference type="EMBL" id="AF355759">
    <property type="protein sequence ID" value="AAK40227.1"/>
    <property type="molecule type" value="mRNA"/>
</dbReference>
<dbReference type="EMBL" id="AL132962">
    <property type="protein sequence ID" value="CAB71075.1"/>
    <property type="status" value="ALT_SEQ"/>
    <property type="molecule type" value="Genomic_DNA"/>
</dbReference>
<dbReference type="EMBL" id="CP002686">
    <property type="protein sequence ID" value="AEE80206.1"/>
    <property type="molecule type" value="Genomic_DNA"/>
</dbReference>
<dbReference type="RefSeq" id="NP_567114.1">
    <molecule id="Q94KK5-1"/>
    <property type="nucleotide sequence ID" value="NM_116010.1"/>
</dbReference>
<dbReference type="SMR" id="Q94KK5"/>
<dbReference type="FunCoup" id="Q94KK5">
    <property type="interactions" value="45"/>
</dbReference>
<dbReference type="STRING" id="3702.Q94KK5"/>
<dbReference type="iPTMnet" id="Q94KK5"/>
<dbReference type="PaxDb" id="3702-AT3G61450.2"/>
<dbReference type="ProteomicsDB" id="228488">
    <molecule id="Q94KK5-1"/>
</dbReference>
<dbReference type="EnsemblPlants" id="AT3G61450.1">
    <molecule id="Q94KK5-1"/>
    <property type="protein sequence ID" value="AT3G61450.1"/>
    <property type="gene ID" value="AT3G61450"/>
</dbReference>
<dbReference type="GeneID" id="825318"/>
<dbReference type="Gramene" id="AT3G61450.1">
    <molecule id="Q94KK5-1"/>
    <property type="protein sequence ID" value="AT3G61450.1"/>
    <property type="gene ID" value="AT3G61450"/>
</dbReference>
<dbReference type="KEGG" id="ath:AT3G61450"/>
<dbReference type="Araport" id="AT3G61450"/>
<dbReference type="TAIR" id="AT3G61450">
    <property type="gene designation" value="SYP73"/>
</dbReference>
<dbReference type="eggNOG" id="ENOG502QS7N">
    <property type="taxonomic scope" value="Eukaryota"/>
</dbReference>
<dbReference type="InParanoid" id="Q94KK5"/>
<dbReference type="PhylomeDB" id="Q94KK5"/>
<dbReference type="PRO" id="PR:Q94KK5"/>
<dbReference type="Proteomes" id="UP000006548">
    <property type="component" value="Chromosome 3"/>
</dbReference>
<dbReference type="ExpressionAtlas" id="Q94KK5">
    <property type="expression patterns" value="baseline and differential"/>
</dbReference>
<dbReference type="GO" id="GO:0016020">
    <property type="term" value="C:membrane"/>
    <property type="evidence" value="ECO:0007669"/>
    <property type="project" value="UniProtKB-SubCell"/>
</dbReference>
<dbReference type="GO" id="GO:0005484">
    <property type="term" value="F:SNAP receptor activity"/>
    <property type="evidence" value="ECO:0007669"/>
    <property type="project" value="InterPro"/>
</dbReference>
<dbReference type="GO" id="GO:0006886">
    <property type="term" value="P:intracellular protein transport"/>
    <property type="evidence" value="ECO:0007669"/>
    <property type="project" value="InterPro"/>
</dbReference>
<dbReference type="CDD" id="cd15841">
    <property type="entry name" value="SNARE_Qc"/>
    <property type="match status" value="1"/>
</dbReference>
<dbReference type="FunFam" id="1.20.5.110:FF:000006">
    <property type="entry name" value="Syntaxin 6"/>
    <property type="match status" value="1"/>
</dbReference>
<dbReference type="Gene3D" id="1.20.5.110">
    <property type="match status" value="1"/>
</dbReference>
<dbReference type="InterPro" id="IPR006012">
    <property type="entry name" value="Syntaxin/epimorphin_CS"/>
</dbReference>
<dbReference type="InterPro" id="IPR000727">
    <property type="entry name" value="T_SNARE_dom"/>
</dbReference>
<dbReference type="Pfam" id="PF05739">
    <property type="entry name" value="SNARE"/>
    <property type="match status" value="1"/>
</dbReference>
<dbReference type="SMART" id="SM00397">
    <property type="entry name" value="t_SNARE"/>
    <property type="match status" value="1"/>
</dbReference>
<dbReference type="SUPFAM" id="SSF58038">
    <property type="entry name" value="SNARE fusion complex"/>
    <property type="match status" value="1"/>
</dbReference>
<dbReference type="PROSITE" id="PS00914">
    <property type="entry name" value="SYNTAXIN"/>
    <property type="match status" value="1"/>
</dbReference>
<dbReference type="PROSITE" id="PS50192">
    <property type="entry name" value="T_SNARE"/>
    <property type="match status" value="1"/>
</dbReference>
<feature type="chain" id="PRO_0000210266" description="Syntaxin-73">
    <location>
        <begin position="1"/>
        <end position="263"/>
    </location>
</feature>
<feature type="topological domain" description="Cytoplasmic" evidence="3">
    <location>
        <begin position="1"/>
        <end position="240"/>
    </location>
</feature>
<feature type="transmembrane region" description="Helical; Anchor for type IV membrane protein" evidence="3">
    <location>
        <begin position="241"/>
        <end position="261"/>
    </location>
</feature>
<feature type="topological domain" description="Vesicular" evidence="3">
    <location>
        <begin position="262"/>
        <end position="263"/>
    </location>
</feature>
<feature type="domain" description="t-SNARE coiled-coil homology" evidence="4">
    <location>
        <begin position="169"/>
        <end position="231"/>
    </location>
</feature>
<feature type="modified residue" description="Phosphoserine" evidence="2">
    <location>
        <position position="12"/>
    </location>
</feature>